<gene>
    <name type="primary">ARF1</name>
</gene>
<proteinExistence type="evidence at transcript level"/>
<name>ARF1_BRARP</name>
<comment type="function">
    <text evidence="1">GTP-binding protein involved in protein trafficking; may modulate vesicle budding and uncoating within the Golgi apparatus.</text>
</comment>
<comment type="catalytic activity">
    <reaction evidence="2">
        <text>GTP + H2O = GDP + phosphate + H(+)</text>
        <dbReference type="Rhea" id="RHEA:19669"/>
        <dbReference type="ChEBI" id="CHEBI:15377"/>
        <dbReference type="ChEBI" id="CHEBI:15378"/>
        <dbReference type="ChEBI" id="CHEBI:37565"/>
        <dbReference type="ChEBI" id="CHEBI:43474"/>
        <dbReference type="ChEBI" id="CHEBI:58189"/>
        <dbReference type="EC" id="3.6.5.2"/>
    </reaction>
</comment>
<comment type="subcellular location">
    <subcellularLocation>
        <location evidence="1">Golgi apparatus</location>
    </subcellularLocation>
</comment>
<comment type="similarity">
    <text evidence="4">Belongs to the small GTPase superfamily. Arf family.</text>
</comment>
<feature type="initiator methionine" description="Removed" evidence="3">
    <location>
        <position position="1"/>
    </location>
</feature>
<feature type="chain" id="PRO_0000207431" description="ADP-ribosylation factor 1">
    <location>
        <begin position="2"/>
        <end position="182"/>
    </location>
</feature>
<feature type="binding site" evidence="1">
    <location>
        <begin position="24"/>
        <end position="31"/>
    </location>
    <ligand>
        <name>GTP</name>
        <dbReference type="ChEBI" id="CHEBI:37565"/>
    </ligand>
</feature>
<feature type="binding site" evidence="1">
    <location>
        <begin position="67"/>
        <end position="71"/>
    </location>
    <ligand>
        <name>GTP</name>
        <dbReference type="ChEBI" id="CHEBI:37565"/>
    </ligand>
</feature>
<feature type="binding site" evidence="1">
    <location>
        <begin position="126"/>
        <end position="129"/>
    </location>
    <ligand>
        <name>GTP</name>
        <dbReference type="ChEBI" id="CHEBI:37565"/>
    </ligand>
</feature>
<feature type="lipid moiety-binding region" description="N-myristoyl glycine" evidence="3">
    <location>
        <position position="2"/>
    </location>
</feature>
<evidence type="ECO:0000250" key="1"/>
<evidence type="ECO:0000250" key="2">
    <source>
        <dbReference type="UniProtKB" id="P84077"/>
    </source>
</evidence>
<evidence type="ECO:0000255" key="3"/>
<evidence type="ECO:0000305" key="4"/>
<organism>
    <name type="scientific">Brassica rapa subsp. pekinensis</name>
    <name type="common">Chinese cabbage</name>
    <name type="synonym">Brassica pekinensis</name>
    <dbReference type="NCBI Taxonomy" id="51351"/>
    <lineage>
        <taxon>Eukaryota</taxon>
        <taxon>Viridiplantae</taxon>
        <taxon>Streptophyta</taxon>
        <taxon>Embryophyta</taxon>
        <taxon>Tracheophyta</taxon>
        <taxon>Spermatophyta</taxon>
        <taxon>Magnoliopsida</taxon>
        <taxon>eudicotyledons</taxon>
        <taxon>Gunneridae</taxon>
        <taxon>Pentapetalae</taxon>
        <taxon>rosids</taxon>
        <taxon>malvids</taxon>
        <taxon>Brassicales</taxon>
        <taxon>Brassicaceae</taxon>
        <taxon>Brassiceae</taxon>
        <taxon>Brassica</taxon>
    </lineage>
</organism>
<accession>Q96361</accession>
<protein>
    <recommendedName>
        <fullName>ADP-ribosylation factor 1</fullName>
        <ecNumber evidence="2">3.6.5.2</ecNumber>
    </recommendedName>
</protein>
<dbReference type="EC" id="3.6.5.2" evidence="2"/>
<dbReference type="EMBL" id="U38470">
    <property type="protein sequence ID" value="AAB17725.1"/>
    <property type="molecule type" value="mRNA"/>
</dbReference>
<dbReference type="SMR" id="Q96361"/>
<dbReference type="FunCoup" id="Q96361">
    <property type="interactions" value="3241"/>
</dbReference>
<dbReference type="STRING" id="51351.Q96361"/>
<dbReference type="KEGG" id="brp:103842229"/>
<dbReference type="KEGG" id="brp:103864586"/>
<dbReference type="eggNOG" id="KOG0070">
    <property type="taxonomic scope" value="Eukaryota"/>
</dbReference>
<dbReference type="HOGENOM" id="CLU_040729_9_3_1"/>
<dbReference type="InParanoid" id="Q96361"/>
<dbReference type="OMA" id="LEXLVET"/>
<dbReference type="GO" id="GO:0005794">
    <property type="term" value="C:Golgi apparatus"/>
    <property type="evidence" value="ECO:0007669"/>
    <property type="project" value="UniProtKB-SubCell"/>
</dbReference>
<dbReference type="GO" id="GO:0005525">
    <property type="term" value="F:GTP binding"/>
    <property type="evidence" value="ECO:0007669"/>
    <property type="project" value="UniProtKB-KW"/>
</dbReference>
<dbReference type="GO" id="GO:0003924">
    <property type="term" value="F:GTPase activity"/>
    <property type="evidence" value="ECO:0007669"/>
    <property type="project" value="InterPro"/>
</dbReference>
<dbReference type="GO" id="GO:0015031">
    <property type="term" value="P:protein transport"/>
    <property type="evidence" value="ECO:0007669"/>
    <property type="project" value="UniProtKB-KW"/>
</dbReference>
<dbReference type="GO" id="GO:0016192">
    <property type="term" value="P:vesicle-mediated transport"/>
    <property type="evidence" value="ECO:0007669"/>
    <property type="project" value="UniProtKB-KW"/>
</dbReference>
<dbReference type="CDD" id="cd04151">
    <property type="entry name" value="Arl1"/>
    <property type="match status" value="1"/>
</dbReference>
<dbReference type="FunFam" id="3.40.50.300:FF:000510">
    <property type="entry name" value="ADP-ribosylation factor 1"/>
    <property type="match status" value="1"/>
</dbReference>
<dbReference type="Gene3D" id="3.40.50.300">
    <property type="entry name" value="P-loop containing nucleotide triphosphate hydrolases"/>
    <property type="match status" value="1"/>
</dbReference>
<dbReference type="InterPro" id="IPR027417">
    <property type="entry name" value="P-loop_NTPase"/>
</dbReference>
<dbReference type="InterPro" id="IPR005225">
    <property type="entry name" value="Small_GTP-bd"/>
</dbReference>
<dbReference type="InterPro" id="IPR024156">
    <property type="entry name" value="Small_GTPase_ARF"/>
</dbReference>
<dbReference type="InterPro" id="IPR006689">
    <property type="entry name" value="Small_GTPase_ARF/SAR"/>
</dbReference>
<dbReference type="NCBIfam" id="TIGR00231">
    <property type="entry name" value="small_GTP"/>
    <property type="match status" value="1"/>
</dbReference>
<dbReference type="PANTHER" id="PTHR11711">
    <property type="entry name" value="ADP RIBOSYLATION FACTOR-RELATED"/>
    <property type="match status" value="1"/>
</dbReference>
<dbReference type="Pfam" id="PF00025">
    <property type="entry name" value="Arf"/>
    <property type="match status" value="1"/>
</dbReference>
<dbReference type="PRINTS" id="PR00328">
    <property type="entry name" value="SAR1GTPBP"/>
</dbReference>
<dbReference type="SMART" id="SM00177">
    <property type="entry name" value="ARF"/>
    <property type="match status" value="1"/>
</dbReference>
<dbReference type="SMART" id="SM00178">
    <property type="entry name" value="SAR"/>
    <property type="match status" value="1"/>
</dbReference>
<dbReference type="SUPFAM" id="SSF52540">
    <property type="entry name" value="P-loop containing nucleoside triphosphate hydrolases"/>
    <property type="match status" value="1"/>
</dbReference>
<dbReference type="PROSITE" id="PS51417">
    <property type="entry name" value="ARF"/>
    <property type="match status" value="1"/>
</dbReference>
<reference key="1">
    <citation type="submission" date="1995-10" db="EMBL/GenBank/DDBJ databases">
        <title>Molecular characterization of small GTP-binding protein family of Chinese cabbage (Brassica campestris L. ssp. pekinensis).</title>
        <authorList>
            <person name="Lim C.O."/>
            <person name="Kim H.Y."/>
            <person name="Cho M.J."/>
        </authorList>
    </citation>
    <scope>NUCLEOTIDE SEQUENCE [MRNA]</scope>
    <source>
        <tissue>Flower</tissue>
    </source>
</reference>
<sequence length="182" mass="20256">MGILFTRMFSSVFGNKEARILVLGLDNAGKTTILYRLQMGEVVSTIPTIGFNVETVQYNNIKFQVWDLGGQTSIRPYWRCYFPNTQAVIYVVDSSDTDRIGVAKEEFHAILEEEELKGAVVLIFANKQDLPGALDDAAVTEALELHKIKSRQWAIFKTCAVKGEGLFEGLDWLSNTLKSGSG</sequence>
<keyword id="KW-0931">ER-Golgi transport</keyword>
<keyword id="KW-0333">Golgi apparatus</keyword>
<keyword id="KW-0342">GTP-binding</keyword>
<keyword id="KW-0378">Hydrolase</keyword>
<keyword id="KW-0449">Lipoprotein</keyword>
<keyword id="KW-0519">Myristate</keyword>
<keyword id="KW-0547">Nucleotide-binding</keyword>
<keyword id="KW-0653">Protein transport</keyword>
<keyword id="KW-0813">Transport</keyword>